<evidence type="ECO:0000255" key="1">
    <source>
        <dbReference type="HAMAP-Rule" id="MF_00036"/>
    </source>
</evidence>
<keyword id="KW-0030">Aminoacyl-tRNA synthetase</keyword>
<keyword id="KW-0067">ATP-binding</keyword>
<keyword id="KW-0963">Cytoplasm</keyword>
<keyword id="KW-0436">Ligase</keyword>
<keyword id="KW-0479">Metal-binding</keyword>
<keyword id="KW-0547">Nucleotide-binding</keyword>
<keyword id="KW-0648">Protein biosynthesis</keyword>
<keyword id="KW-1185">Reference proteome</keyword>
<keyword id="KW-0694">RNA-binding</keyword>
<keyword id="KW-0820">tRNA-binding</keyword>
<keyword id="KW-0862">Zinc</keyword>
<gene>
    <name evidence="1" type="primary">alaS</name>
    <name type="ordered locus">Bphy_1613</name>
</gene>
<sequence>MKAAEIREKFLKFFESKGHTIVRSSSLVPGNDPTLLFTNSGMVQFKDVFLGAESRPYSRATTAQRSVRAGGKHNDLENVGYTARHHTFFEMLGNFSFGDYFKRDAIHYAWELLTGVYQLPKEKLWVTVYQEDDEAYDIWAKEVGVPAERIIRIGDNKGARYASDNFWQMADTGPCGPCSEIFYDHGPDVWGGPPGSPEEDGDRYIEIWNLVFMQFNRDAQGNMTPLPKQCVDTGMGLERIAAVLQHVHSNYEIDLFQALIKAAARETNIDDLSNNSLKVVADHIRACSFLIVDGVIPGNEGRGYVLRRIVRRAIRHGYKLGRKGSFFHKLVADLVAQMGGAYPELKDAEQRVTHVLRQEEERFFETIEHGMSILEGALADLDSKGGKTLDGEVAFKLHDTYGFPLDLTADVCRERGVTVDEPAFDEAMARQREQARAAGKFKMAQGLDYTGAKTTFHGYEEIVFDDARVTALYVDGASVNEVTKGQQAVVVLDHTPFYAESGGQVGDQGVLANASIRFGVVDTLKVQADVVGHHGTLEQGTLKVGDVVKAEIDAVRRARTARNHSATHLMHKALREVLGGHVQQKGSLVDADKTRFDFAHNAPMTDEQIRRVEEIVNAEVLANAPGIVRVMAYDEAVKGGAMALFGEKYGDEVRVLDLGFSRELCGGTHVNRTGDIGLFKIVMEGGVAAGIRRVEAITGDNAVRFVQELDARIHAAAAALKAQPSELTQRISMVQDQVKALEKELGALKSKLASSQGDELASQAIDVSGVQVLAATLEGADVKTLRETVDKLKDKLKSAAIVLASVEGGKVSLIAGVTADTSKKVKAGELVNFVAQQVGGKGGGRPDMAQAGGTEPANLPAALAGVKGWVEAQL</sequence>
<protein>
    <recommendedName>
        <fullName evidence="1">Alanine--tRNA ligase</fullName>
        <ecNumber evidence="1">6.1.1.7</ecNumber>
    </recommendedName>
    <alternativeName>
        <fullName evidence="1">Alanyl-tRNA synthetase</fullName>
        <shortName evidence="1">AlaRS</shortName>
    </alternativeName>
</protein>
<accession>B2JK72</accession>
<organism>
    <name type="scientific">Paraburkholderia phymatum (strain DSM 17167 / CIP 108236 / LMG 21445 / STM815)</name>
    <name type="common">Burkholderia phymatum</name>
    <dbReference type="NCBI Taxonomy" id="391038"/>
    <lineage>
        <taxon>Bacteria</taxon>
        <taxon>Pseudomonadati</taxon>
        <taxon>Pseudomonadota</taxon>
        <taxon>Betaproteobacteria</taxon>
        <taxon>Burkholderiales</taxon>
        <taxon>Burkholderiaceae</taxon>
        <taxon>Paraburkholderia</taxon>
    </lineage>
</organism>
<comment type="function">
    <text evidence="1">Catalyzes the attachment of alanine to tRNA(Ala) in a two-step reaction: alanine is first activated by ATP to form Ala-AMP and then transferred to the acceptor end of tRNA(Ala). Also edits incorrectly charged Ser-tRNA(Ala) and Gly-tRNA(Ala) via its editing domain.</text>
</comment>
<comment type="catalytic activity">
    <reaction evidence="1">
        <text>tRNA(Ala) + L-alanine + ATP = L-alanyl-tRNA(Ala) + AMP + diphosphate</text>
        <dbReference type="Rhea" id="RHEA:12540"/>
        <dbReference type="Rhea" id="RHEA-COMP:9657"/>
        <dbReference type="Rhea" id="RHEA-COMP:9923"/>
        <dbReference type="ChEBI" id="CHEBI:30616"/>
        <dbReference type="ChEBI" id="CHEBI:33019"/>
        <dbReference type="ChEBI" id="CHEBI:57972"/>
        <dbReference type="ChEBI" id="CHEBI:78442"/>
        <dbReference type="ChEBI" id="CHEBI:78497"/>
        <dbReference type="ChEBI" id="CHEBI:456215"/>
        <dbReference type="EC" id="6.1.1.7"/>
    </reaction>
</comment>
<comment type="cofactor">
    <cofactor evidence="1">
        <name>Zn(2+)</name>
        <dbReference type="ChEBI" id="CHEBI:29105"/>
    </cofactor>
    <text evidence="1">Binds 1 zinc ion per subunit.</text>
</comment>
<comment type="subcellular location">
    <subcellularLocation>
        <location evidence="1">Cytoplasm</location>
    </subcellularLocation>
</comment>
<comment type="domain">
    <text evidence="1">Consists of three domains; the N-terminal catalytic domain, the editing domain and the C-terminal C-Ala domain. The editing domain removes incorrectly charged amino acids, while the C-Ala domain, along with tRNA(Ala), serves as a bridge to cooperatively bring together the editing and aminoacylation centers thus stimulating deacylation of misacylated tRNAs.</text>
</comment>
<comment type="similarity">
    <text evidence="1">Belongs to the class-II aminoacyl-tRNA synthetase family.</text>
</comment>
<name>SYA_PARP8</name>
<feature type="chain" id="PRO_0000347528" description="Alanine--tRNA ligase">
    <location>
        <begin position="1"/>
        <end position="874"/>
    </location>
</feature>
<feature type="binding site" evidence="1">
    <location>
        <position position="564"/>
    </location>
    <ligand>
        <name>Zn(2+)</name>
        <dbReference type="ChEBI" id="CHEBI:29105"/>
    </ligand>
</feature>
<feature type="binding site" evidence="1">
    <location>
        <position position="568"/>
    </location>
    <ligand>
        <name>Zn(2+)</name>
        <dbReference type="ChEBI" id="CHEBI:29105"/>
    </ligand>
</feature>
<feature type="binding site" evidence="1">
    <location>
        <position position="665"/>
    </location>
    <ligand>
        <name>Zn(2+)</name>
        <dbReference type="ChEBI" id="CHEBI:29105"/>
    </ligand>
</feature>
<feature type="binding site" evidence="1">
    <location>
        <position position="669"/>
    </location>
    <ligand>
        <name>Zn(2+)</name>
        <dbReference type="ChEBI" id="CHEBI:29105"/>
    </ligand>
</feature>
<proteinExistence type="inferred from homology"/>
<reference key="1">
    <citation type="journal article" date="2014" name="Stand. Genomic Sci.">
        <title>Complete genome sequence of Burkholderia phymatum STM815(T), a broad host range and efficient nitrogen-fixing symbiont of Mimosa species.</title>
        <authorList>
            <person name="Moulin L."/>
            <person name="Klonowska A."/>
            <person name="Caroline B."/>
            <person name="Booth K."/>
            <person name="Vriezen J.A."/>
            <person name="Melkonian R."/>
            <person name="James E.K."/>
            <person name="Young J.P."/>
            <person name="Bena G."/>
            <person name="Hauser L."/>
            <person name="Land M."/>
            <person name="Kyrpides N."/>
            <person name="Bruce D."/>
            <person name="Chain P."/>
            <person name="Copeland A."/>
            <person name="Pitluck S."/>
            <person name="Woyke T."/>
            <person name="Lizotte-Waniewski M."/>
            <person name="Bristow J."/>
            <person name="Riley M."/>
        </authorList>
    </citation>
    <scope>NUCLEOTIDE SEQUENCE [LARGE SCALE GENOMIC DNA]</scope>
    <source>
        <strain>DSM 17167 / CIP 108236 / LMG 21445 / STM815</strain>
    </source>
</reference>
<dbReference type="EC" id="6.1.1.7" evidence="1"/>
<dbReference type="EMBL" id="CP001043">
    <property type="protein sequence ID" value="ACC70795.1"/>
    <property type="molecule type" value="Genomic_DNA"/>
</dbReference>
<dbReference type="RefSeq" id="WP_012401005.1">
    <property type="nucleotide sequence ID" value="NC_010622.1"/>
</dbReference>
<dbReference type="SMR" id="B2JK72"/>
<dbReference type="STRING" id="391038.Bphy_1613"/>
<dbReference type="KEGG" id="bph:Bphy_1613"/>
<dbReference type="eggNOG" id="COG0013">
    <property type="taxonomic scope" value="Bacteria"/>
</dbReference>
<dbReference type="HOGENOM" id="CLU_004485_1_1_4"/>
<dbReference type="OrthoDB" id="9803884at2"/>
<dbReference type="Proteomes" id="UP000001192">
    <property type="component" value="Chromosome 1"/>
</dbReference>
<dbReference type="GO" id="GO:0005829">
    <property type="term" value="C:cytosol"/>
    <property type="evidence" value="ECO:0007669"/>
    <property type="project" value="TreeGrafter"/>
</dbReference>
<dbReference type="GO" id="GO:0004813">
    <property type="term" value="F:alanine-tRNA ligase activity"/>
    <property type="evidence" value="ECO:0007669"/>
    <property type="project" value="UniProtKB-UniRule"/>
</dbReference>
<dbReference type="GO" id="GO:0002161">
    <property type="term" value="F:aminoacyl-tRNA deacylase activity"/>
    <property type="evidence" value="ECO:0007669"/>
    <property type="project" value="TreeGrafter"/>
</dbReference>
<dbReference type="GO" id="GO:0005524">
    <property type="term" value="F:ATP binding"/>
    <property type="evidence" value="ECO:0007669"/>
    <property type="project" value="UniProtKB-UniRule"/>
</dbReference>
<dbReference type="GO" id="GO:0000049">
    <property type="term" value="F:tRNA binding"/>
    <property type="evidence" value="ECO:0007669"/>
    <property type="project" value="UniProtKB-KW"/>
</dbReference>
<dbReference type="GO" id="GO:0008270">
    <property type="term" value="F:zinc ion binding"/>
    <property type="evidence" value="ECO:0007669"/>
    <property type="project" value="UniProtKB-UniRule"/>
</dbReference>
<dbReference type="GO" id="GO:0006419">
    <property type="term" value="P:alanyl-tRNA aminoacylation"/>
    <property type="evidence" value="ECO:0007669"/>
    <property type="project" value="UniProtKB-UniRule"/>
</dbReference>
<dbReference type="GO" id="GO:0045892">
    <property type="term" value="P:negative regulation of DNA-templated transcription"/>
    <property type="evidence" value="ECO:0007669"/>
    <property type="project" value="TreeGrafter"/>
</dbReference>
<dbReference type="CDD" id="cd00673">
    <property type="entry name" value="AlaRS_core"/>
    <property type="match status" value="1"/>
</dbReference>
<dbReference type="FunFam" id="2.40.30.130:FF:000001">
    <property type="entry name" value="Alanine--tRNA ligase"/>
    <property type="match status" value="1"/>
</dbReference>
<dbReference type="FunFam" id="3.10.310.40:FF:000001">
    <property type="entry name" value="Alanine--tRNA ligase"/>
    <property type="match status" value="1"/>
</dbReference>
<dbReference type="FunFam" id="3.30.54.20:FF:000001">
    <property type="entry name" value="Alanine--tRNA ligase"/>
    <property type="match status" value="1"/>
</dbReference>
<dbReference type="FunFam" id="3.30.930.10:FF:000004">
    <property type="entry name" value="Alanine--tRNA ligase"/>
    <property type="match status" value="1"/>
</dbReference>
<dbReference type="FunFam" id="3.30.980.10:FF:000004">
    <property type="entry name" value="Alanine--tRNA ligase, cytoplasmic"/>
    <property type="match status" value="1"/>
</dbReference>
<dbReference type="Gene3D" id="2.40.30.130">
    <property type="match status" value="1"/>
</dbReference>
<dbReference type="Gene3D" id="3.10.310.40">
    <property type="match status" value="1"/>
</dbReference>
<dbReference type="Gene3D" id="3.30.54.20">
    <property type="match status" value="1"/>
</dbReference>
<dbReference type="Gene3D" id="6.10.250.550">
    <property type="match status" value="1"/>
</dbReference>
<dbReference type="Gene3D" id="3.30.930.10">
    <property type="entry name" value="Bira Bifunctional Protein, Domain 2"/>
    <property type="match status" value="1"/>
</dbReference>
<dbReference type="Gene3D" id="3.30.980.10">
    <property type="entry name" value="Threonyl-trna Synthetase, Chain A, domain 2"/>
    <property type="match status" value="1"/>
</dbReference>
<dbReference type="HAMAP" id="MF_00036_B">
    <property type="entry name" value="Ala_tRNA_synth_B"/>
    <property type="match status" value="1"/>
</dbReference>
<dbReference type="InterPro" id="IPR045864">
    <property type="entry name" value="aa-tRNA-synth_II/BPL/LPL"/>
</dbReference>
<dbReference type="InterPro" id="IPR002318">
    <property type="entry name" value="Ala-tRNA-lgiase_IIc"/>
</dbReference>
<dbReference type="InterPro" id="IPR018162">
    <property type="entry name" value="Ala-tRNA-ligase_IIc_anticod-bd"/>
</dbReference>
<dbReference type="InterPro" id="IPR018165">
    <property type="entry name" value="Ala-tRNA-synth_IIc_core"/>
</dbReference>
<dbReference type="InterPro" id="IPR018164">
    <property type="entry name" value="Ala-tRNA-synth_IIc_N"/>
</dbReference>
<dbReference type="InterPro" id="IPR050058">
    <property type="entry name" value="Ala-tRNA_ligase"/>
</dbReference>
<dbReference type="InterPro" id="IPR023033">
    <property type="entry name" value="Ala_tRNA_ligase_euk/bac"/>
</dbReference>
<dbReference type="InterPro" id="IPR003156">
    <property type="entry name" value="DHHA1_dom"/>
</dbReference>
<dbReference type="InterPro" id="IPR018163">
    <property type="entry name" value="Thr/Ala-tRNA-synth_IIc_edit"/>
</dbReference>
<dbReference type="InterPro" id="IPR009000">
    <property type="entry name" value="Transl_B-barrel_sf"/>
</dbReference>
<dbReference type="InterPro" id="IPR012947">
    <property type="entry name" value="tRNA_SAD"/>
</dbReference>
<dbReference type="NCBIfam" id="TIGR00344">
    <property type="entry name" value="alaS"/>
    <property type="match status" value="1"/>
</dbReference>
<dbReference type="PANTHER" id="PTHR11777:SF9">
    <property type="entry name" value="ALANINE--TRNA LIGASE, CYTOPLASMIC"/>
    <property type="match status" value="1"/>
</dbReference>
<dbReference type="PANTHER" id="PTHR11777">
    <property type="entry name" value="ALANYL-TRNA SYNTHETASE"/>
    <property type="match status" value="1"/>
</dbReference>
<dbReference type="Pfam" id="PF02272">
    <property type="entry name" value="DHHA1"/>
    <property type="match status" value="1"/>
</dbReference>
<dbReference type="Pfam" id="PF01411">
    <property type="entry name" value="tRNA-synt_2c"/>
    <property type="match status" value="1"/>
</dbReference>
<dbReference type="Pfam" id="PF07973">
    <property type="entry name" value="tRNA_SAD"/>
    <property type="match status" value="1"/>
</dbReference>
<dbReference type="PRINTS" id="PR00980">
    <property type="entry name" value="TRNASYNTHALA"/>
</dbReference>
<dbReference type="SMART" id="SM00863">
    <property type="entry name" value="tRNA_SAD"/>
    <property type="match status" value="1"/>
</dbReference>
<dbReference type="SUPFAM" id="SSF55681">
    <property type="entry name" value="Class II aaRS and biotin synthetases"/>
    <property type="match status" value="1"/>
</dbReference>
<dbReference type="SUPFAM" id="SSF101353">
    <property type="entry name" value="Putative anticodon-binding domain of alanyl-tRNA synthetase (AlaRS)"/>
    <property type="match status" value="1"/>
</dbReference>
<dbReference type="SUPFAM" id="SSF55186">
    <property type="entry name" value="ThrRS/AlaRS common domain"/>
    <property type="match status" value="1"/>
</dbReference>
<dbReference type="SUPFAM" id="SSF50447">
    <property type="entry name" value="Translation proteins"/>
    <property type="match status" value="1"/>
</dbReference>
<dbReference type="PROSITE" id="PS50860">
    <property type="entry name" value="AA_TRNA_LIGASE_II_ALA"/>
    <property type="match status" value="1"/>
</dbReference>